<protein>
    <recommendedName>
        <fullName>Intraflagellar transport protein 46</fullName>
    </recommendedName>
    <alternativeName>
        <fullName>Flagellar-associated protein 32</fullName>
    </alternativeName>
    <alternativeName>
        <fullName evidence="11">IFT complex B protein</fullName>
    </alternativeName>
</protein>
<reference evidence="10 11" key="1">
    <citation type="journal article" date="2007" name="J. Cell Biol.">
        <title>Functional analysis of an individual IFT protein: IFT46 is required for transport of outer dynein arms into flagella.</title>
        <authorList>
            <person name="Hou Y."/>
            <person name="Qin H."/>
            <person name="Follit J.A."/>
            <person name="Pazour G.J."/>
            <person name="Rosenbaum J.L."/>
            <person name="Witman G.B."/>
        </authorList>
    </citation>
    <scope>NUCLEOTIDE SEQUENCE [MRNA]</scope>
    <scope>FUNCTION</scope>
    <scope>SUBCELLULAR LOCATION</scope>
    <scope>DISRUPTION PHENOTYPE</scope>
</reference>
<reference key="2">
    <citation type="journal article" date="2007" name="Science">
        <title>The Chlamydomonas genome reveals the evolution of key animal and plant functions.</title>
        <authorList>
            <person name="Merchant S.S."/>
            <person name="Prochnik S.E."/>
            <person name="Vallon O."/>
            <person name="Harris E.H."/>
            <person name="Karpowicz S.J."/>
            <person name="Witman G.B."/>
            <person name="Terry A."/>
            <person name="Salamov A."/>
            <person name="Fritz-Laylin L.K."/>
            <person name="Marechal-Drouard L."/>
            <person name="Marshall W.F."/>
            <person name="Qu L.H."/>
            <person name="Nelson D.R."/>
            <person name="Sanderfoot A.A."/>
            <person name="Spalding M.H."/>
            <person name="Kapitonov V.V."/>
            <person name="Ren Q."/>
            <person name="Ferris P."/>
            <person name="Lindquist E."/>
            <person name="Shapiro H."/>
            <person name="Lucas S.M."/>
            <person name="Grimwood J."/>
            <person name="Schmutz J."/>
            <person name="Cardol P."/>
            <person name="Cerutti H."/>
            <person name="Chanfreau G."/>
            <person name="Chen C.L."/>
            <person name="Cognat V."/>
            <person name="Croft M.T."/>
            <person name="Dent R."/>
            <person name="Dutcher S."/>
            <person name="Fernandez E."/>
            <person name="Fukuzawa H."/>
            <person name="Gonzalez-Ballester D."/>
            <person name="Gonzalez-Halphen D."/>
            <person name="Hallmann A."/>
            <person name="Hanikenne M."/>
            <person name="Hippler M."/>
            <person name="Inwood W."/>
            <person name="Jabbari K."/>
            <person name="Kalanon M."/>
            <person name="Kuras R."/>
            <person name="Lefebvre P.A."/>
            <person name="Lemaire S.D."/>
            <person name="Lobanov A.V."/>
            <person name="Lohr M."/>
            <person name="Manuell A."/>
            <person name="Meier I."/>
            <person name="Mets L."/>
            <person name="Mittag M."/>
            <person name="Mittelmeier T."/>
            <person name="Moroney J.V."/>
            <person name="Moseley J."/>
            <person name="Napoli C."/>
            <person name="Nedelcu A.M."/>
            <person name="Niyogi K."/>
            <person name="Novoselov S.V."/>
            <person name="Paulsen I.T."/>
            <person name="Pazour G.J."/>
            <person name="Purton S."/>
            <person name="Ral J.P."/>
            <person name="Riano-Pachon D.M."/>
            <person name="Riekhof W."/>
            <person name="Rymarquis L."/>
            <person name="Schroda M."/>
            <person name="Stern D."/>
            <person name="Umen J."/>
            <person name="Willows R."/>
            <person name="Wilson N."/>
            <person name="Zimmer S.L."/>
            <person name="Allmer J."/>
            <person name="Balk J."/>
            <person name="Bisova K."/>
            <person name="Chen C.J."/>
            <person name="Elias M."/>
            <person name="Gendler K."/>
            <person name="Hauser C."/>
            <person name="Lamb M.R."/>
            <person name="Ledford H."/>
            <person name="Long J.C."/>
            <person name="Minagawa J."/>
            <person name="Page M.D."/>
            <person name="Pan J."/>
            <person name="Pootakham W."/>
            <person name="Roje S."/>
            <person name="Rose A."/>
            <person name="Stahlberg E."/>
            <person name="Terauchi A.M."/>
            <person name="Yang P."/>
            <person name="Ball S."/>
            <person name="Bowler C."/>
            <person name="Dieckmann C.L."/>
            <person name="Gladyshev V.N."/>
            <person name="Green P."/>
            <person name="Jorgensen R."/>
            <person name="Mayfield S."/>
            <person name="Mueller-Roeber B."/>
            <person name="Rajamani S."/>
            <person name="Sayre R.T."/>
            <person name="Brokstein P."/>
            <person name="Dubchak I."/>
            <person name="Goodstein D."/>
            <person name="Hornick L."/>
            <person name="Huang Y.W."/>
            <person name="Jhaveri J."/>
            <person name="Luo Y."/>
            <person name="Martinez D."/>
            <person name="Ngau W.C."/>
            <person name="Otillar B."/>
            <person name="Poliakov A."/>
            <person name="Porter A."/>
            <person name="Szajkowski L."/>
            <person name="Werner G."/>
            <person name="Zhou K."/>
            <person name="Grigoriev I.V."/>
            <person name="Rokhsar D.S."/>
            <person name="Grossman A.R."/>
        </authorList>
    </citation>
    <scope>NUCLEOTIDE SEQUENCE [LARGE SCALE GENOMIC DNA]</scope>
    <source>
        <strain>CC-503</strain>
        <strain>cw92</strain>
    </source>
</reference>
<reference evidence="10" key="3">
    <citation type="journal article" date="2005" name="J. Biol. Chem.">
        <title>Characterization of the intraflagellar transport complex B core: direct interaction of the IFT81 and IFT74/72 subunits.</title>
        <authorList>
            <person name="Lucker B.F."/>
            <person name="Behal R.H."/>
            <person name="Qin H."/>
            <person name="Siron L.C."/>
            <person name="Taggart W.D."/>
            <person name="Rosenbaum J.L."/>
            <person name="Cole D.G."/>
        </authorList>
    </citation>
    <scope>SUBUNIT</scope>
    <scope>SUBCELLULAR LOCATION</scope>
</reference>
<reference key="4">
    <citation type="journal article" date="2005" name="J. Cell Biol.">
        <title>Proteomic analysis of a eukaryotic cilium.</title>
        <authorList>
            <person name="Pazour G.J."/>
            <person name="Agrin N."/>
            <person name="Leszyk J."/>
            <person name="Witman G.B."/>
        </authorList>
    </citation>
    <scope>IDENTIFICATION BY MASS SPECTROMETRY</scope>
</reference>
<reference evidence="10" key="5">
    <citation type="journal article" date="2008" name="J. Cell Biol.">
        <title>ODA16 aids axonemal outer row dynein assembly through an interaction with the intraflagellar transport machinery.</title>
        <authorList>
            <person name="Ahmed N.T."/>
            <person name="Gao C."/>
            <person name="Lucker B.F."/>
            <person name="Cole D.G."/>
            <person name="Mitchell D.R."/>
        </authorList>
    </citation>
    <scope>INTERACTION WITH DAW1</scope>
    <scope>SUBCELLULAR LOCATION</scope>
</reference>
<reference evidence="10" key="6">
    <citation type="journal article" date="2009" name="Cell Motil. Cytoskeleton">
        <title>HA-tagging of putative flagellar proteins in Chlamydomonas reinhardtii identifies a novel protein of intraflagellar transport complex B.</title>
        <authorList>
            <person name="Lechtreck K.F."/>
            <person name="Luro S."/>
            <person name="Awata J."/>
            <person name="Witman G.B."/>
        </authorList>
    </citation>
    <scope>INTERACTION WITH IFT25</scope>
    <scope>SUBCELLULAR LOCATION</scope>
</reference>
<reference evidence="10" key="7">
    <citation type="journal article" date="2009" name="PLoS ONE">
        <title>Intraflagellar transport (IFT) protein IFT25 is a phosphoprotein component of IFT complex B and physically interacts with IFT27 in Chlamydomonas.</title>
        <authorList>
            <person name="Wang Z."/>
            <person name="Fan Z.C."/>
            <person name="Williamson S.M."/>
            <person name="Qin H."/>
        </authorList>
    </citation>
    <scope>SUBCELLULAR LOCATION</scope>
</reference>
<reference evidence="10" key="8">
    <citation type="journal article" date="2010" name="J. Biol. Chem.">
        <title>Direct interactions of intraflagellar transport complex B proteins IFT88, IFT52, and IFT46.</title>
        <authorList>
            <person name="Lucker B.F."/>
            <person name="Miller M.S."/>
            <person name="Dziedzic S.A."/>
            <person name="Blackmarr P.T."/>
            <person name="Cole D.G."/>
        </authorList>
    </citation>
    <scope>FUNCTION</scope>
    <scope>INTERACTION WITH IFT52 AND IFT88</scope>
    <scope>DISRUPTION PHENOTYPE</scope>
</reference>
<reference evidence="10" key="9">
    <citation type="journal article" date="2010" name="Mol. Biol. Cell">
        <title>Chlamydomonas IFT70/CrDYF-1 is a core component of IFT particle complex B and is required for flagellar assembly.</title>
        <authorList>
            <person name="Fan Z.C."/>
            <person name="Behal R.H."/>
            <person name="Geimer S."/>
            <person name="Wang Z."/>
            <person name="Williamson S.M."/>
            <person name="Zhang H."/>
            <person name="Cole D.G."/>
            <person name="Qin H."/>
        </authorList>
    </citation>
    <scope>INTERACTION WITH IFT70</scope>
</reference>
<keyword id="KW-0002">3D-structure</keyword>
<keyword id="KW-0966">Cell projection</keyword>
<keyword id="KW-0969">Cilium</keyword>
<keyword id="KW-0963">Cytoplasm</keyword>
<keyword id="KW-0206">Cytoskeleton</keyword>
<name>IFT46_CHLRE</name>
<comment type="function">
    <text evidence="4 8">Forms part of a complex involved in intraflagellar transport (IFT), the bi-directional movement of particles required for the assembly, maintenance and functioning of primary cilia. Plays a role in maintaining IFT complex B stability.</text>
</comment>
<comment type="subunit">
    <text evidence="3 5 6 8 9">Component of the IFT complex B, the core composed of IFT25, IFT27, IFT46, IFT52, IFT74, IFT81 and IFT88 as well as associated subunits IFT20, IFT57, IFT80 and IFT172. Interacts with IFT25, IFT52, IFT70, IFT88 and DAW1.</text>
</comment>
<comment type="subcellular location">
    <subcellularLocation>
        <location evidence="3 4 5 6 7">Cytoplasm</location>
        <location evidence="3 4 5 6 7">Cytoskeleton</location>
        <location evidence="3 4 5 6 7">Cilium basal body</location>
    </subcellularLocation>
    <subcellularLocation>
        <location evidence="3 4 5 6 7">Cell projection</location>
        <location evidence="3 4 5 6 7">Cilium</location>
    </subcellularLocation>
    <text evidence="3 4 5 6 7">Expression is concentrated at the cilium basal body but is also detected along the length of the cilium.</text>
</comment>
<comment type="disruption phenotype">
    <text evidence="4 8">Individuals have short, non-motile flagellae.</text>
</comment>
<comment type="similarity">
    <text evidence="1">Belongs to the IFT46 family.</text>
</comment>
<comment type="sequence caution" evidence="10">
    <conflict type="erroneous gene model prediction">
        <sequence resource="EMBL-CDS" id="EDO96191"/>
    </conflict>
</comment>
<evidence type="ECO:0000255" key="1"/>
<evidence type="ECO:0000256" key="2">
    <source>
        <dbReference type="SAM" id="MobiDB-lite"/>
    </source>
</evidence>
<evidence type="ECO:0000269" key="3">
    <source>
    </source>
</evidence>
<evidence type="ECO:0000269" key="4">
    <source>
    </source>
</evidence>
<evidence type="ECO:0000269" key="5">
    <source>
    </source>
</evidence>
<evidence type="ECO:0000269" key="6">
    <source>
    </source>
</evidence>
<evidence type="ECO:0000269" key="7">
    <source>
    </source>
</evidence>
<evidence type="ECO:0000269" key="8">
    <source>
    </source>
</evidence>
<evidence type="ECO:0000269" key="9">
    <source>
    </source>
</evidence>
<evidence type="ECO:0000305" key="10"/>
<evidence type="ECO:0000312" key="11">
    <source>
        <dbReference type="EMBL" id="ABH06907.1"/>
    </source>
</evidence>
<accession>A2T2X4</accession>
<accession>A8JIV6</accession>
<feature type="chain" id="PRO_0000399500" description="Intraflagellar transport protein 46">
    <location>
        <begin position="1"/>
        <end position="344"/>
    </location>
</feature>
<feature type="region of interest" description="Disordered" evidence="2">
    <location>
        <begin position="1"/>
        <end position="100"/>
    </location>
</feature>
<feature type="compositionally biased region" description="Acidic residues" evidence="2">
    <location>
        <begin position="1"/>
        <end position="16"/>
    </location>
</feature>
<feature type="compositionally biased region" description="Polar residues" evidence="2">
    <location>
        <begin position="18"/>
        <end position="30"/>
    </location>
</feature>
<dbReference type="EMBL" id="DQ787426">
    <property type="protein sequence ID" value="ABH06907.1"/>
    <property type="molecule type" value="mRNA"/>
</dbReference>
<dbReference type="EMBL" id="DS496218">
    <property type="protein sequence ID" value="EDO96191.1"/>
    <property type="status" value="ALT_SEQ"/>
    <property type="molecule type" value="Genomic_DNA"/>
</dbReference>
<dbReference type="RefSeq" id="XP_001691140.1">
    <property type="nucleotide sequence ID" value="XM_001691088.1"/>
</dbReference>
<dbReference type="PDB" id="8BD7">
    <property type="method" value="EM"/>
    <property type="resolution" value="9.90 A"/>
    <property type="chains" value="D/N=1-344"/>
</dbReference>
<dbReference type="PDB" id="8RUY">
    <property type="method" value="EM"/>
    <property type="resolution" value="15.40 A"/>
    <property type="chains" value="S/s=1-344"/>
</dbReference>
<dbReference type="PDBsum" id="8BD7"/>
<dbReference type="PDBsum" id="8RUY"/>
<dbReference type="EMDB" id="EMD-15977"/>
<dbReference type="EMDB" id="EMD-19515"/>
<dbReference type="SMR" id="A2T2X4"/>
<dbReference type="PaxDb" id="3055-EDO96191"/>
<dbReference type="EnsemblPlants" id="PNW83496">
    <property type="protein sequence ID" value="PNW83496"/>
    <property type="gene ID" value="CHLRE_05g241637v5"/>
</dbReference>
<dbReference type="GeneID" id="5716734"/>
<dbReference type="Gramene" id="PNW83496">
    <property type="protein sequence ID" value="PNW83496"/>
    <property type="gene ID" value="CHLRE_05g241637v5"/>
</dbReference>
<dbReference type="KEGG" id="cre:CHLRE_05g241637v5"/>
<dbReference type="eggNOG" id="ENOG502QPNA">
    <property type="taxonomic scope" value="Eukaryota"/>
</dbReference>
<dbReference type="HOGENOM" id="CLU_039364_3_0_1"/>
<dbReference type="OMA" id="AYNAQEY"/>
<dbReference type="OrthoDB" id="2119217at2759"/>
<dbReference type="GO" id="GO:0097546">
    <property type="term" value="C:ciliary base"/>
    <property type="evidence" value="ECO:0000314"/>
    <property type="project" value="MGI"/>
</dbReference>
<dbReference type="GO" id="GO:0060170">
    <property type="term" value="C:ciliary membrane"/>
    <property type="evidence" value="ECO:0000314"/>
    <property type="project" value="MGI"/>
</dbReference>
<dbReference type="GO" id="GO:0005737">
    <property type="term" value="C:cytoplasm"/>
    <property type="evidence" value="ECO:0007669"/>
    <property type="project" value="UniProtKB-KW"/>
</dbReference>
<dbReference type="GO" id="GO:0005856">
    <property type="term" value="C:cytoskeleton"/>
    <property type="evidence" value="ECO:0007669"/>
    <property type="project" value="UniProtKB-KW"/>
</dbReference>
<dbReference type="GO" id="GO:0030992">
    <property type="term" value="C:intraciliary transport particle B"/>
    <property type="evidence" value="ECO:0000314"/>
    <property type="project" value="UniProtKB"/>
</dbReference>
<dbReference type="GO" id="GO:0031514">
    <property type="term" value="C:motile cilium"/>
    <property type="evidence" value="ECO:0000314"/>
    <property type="project" value="BHF-UCL"/>
</dbReference>
<dbReference type="GO" id="GO:0035082">
    <property type="term" value="P:axoneme assembly"/>
    <property type="evidence" value="ECO:0000315"/>
    <property type="project" value="MGI"/>
</dbReference>
<dbReference type="GO" id="GO:0060271">
    <property type="term" value="P:cilium assembly"/>
    <property type="evidence" value="ECO:0000315"/>
    <property type="project" value="BHF-UCL"/>
</dbReference>
<dbReference type="GO" id="GO:0044782">
    <property type="term" value="P:cilium organization"/>
    <property type="evidence" value="ECO:0000315"/>
    <property type="project" value="MGI"/>
</dbReference>
<dbReference type="GO" id="GO:0060285">
    <property type="term" value="P:cilium-dependent cell motility"/>
    <property type="evidence" value="ECO:0000315"/>
    <property type="project" value="MGI"/>
</dbReference>
<dbReference type="GO" id="GO:0042073">
    <property type="term" value="P:intraciliary transport"/>
    <property type="evidence" value="ECO:0000314"/>
    <property type="project" value="UniProtKB"/>
</dbReference>
<dbReference type="GO" id="GO:0036158">
    <property type="term" value="P:outer dynein arm assembly"/>
    <property type="evidence" value="ECO:0000315"/>
    <property type="project" value="UniProtKB"/>
</dbReference>
<dbReference type="GO" id="GO:0050821">
    <property type="term" value="P:protein stabilization"/>
    <property type="evidence" value="ECO:0000314"/>
    <property type="project" value="BHF-UCL"/>
</dbReference>
<dbReference type="GO" id="GO:0015031">
    <property type="term" value="P:protein transport"/>
    <property type="evidence" value="ECO:0000315"/>
    <property type="project" value="MGI"/>
</dbReference>
<dbReference type="GO" id="GO:1902017">
    <property type="term" value="P:regulation of cilium assembly"/>
    <property type="evidence" value="ECO:0000315"/>
    <property type="project" value="MGI"/>
</dbReference>
<dbReference type="GO" id="GO:0031647">
    <property type="term" value="P:regulation of protein stability"/>
    <property type="evidence" value="ECO:0000315"/>
    <property type="project" value="MGI"/>
</dbReference>
<dbReference type="InterPro" id="IPR022088">
    <property type="entry name" value="Intraflagellar_transp_cmplxB"/>
</dbReference>
<dbReference type="PANTHER" id="PTHR13376">
    <property type="entry name" value="INTRAFLAGELLAR TRANSPORT PROTEIN 46 HOMOLOG"/>
    <property type="match status" value="1"/>
</dbReference>
<dbReference type="PANTHER" id="PTHR13376:SF0">
    <property type="entry name" value="INTRAFLAGELLAR TRANSPORT PROTEIN 46 HOMOLOG"/>
    <property type="match status" value="1"/>
</dbReference>
<dbReference type="Pfam" id="PF12317">
    <property type="entry name" value="IFT46_B_C"/>
    <property type="match status" value="1"/>
</dbReference>
<gene>
    <name evidence="11" type="primary">IFT46</name>
    <name type="synonym">FAP32</name>
    <name type="ORF">CHLREDRAFT_108954</name>
</gene>
<sequence length="344" mass="37935">MDDSMDYPDRDGDDLDQFQGTARSQVVQNQPHDEEVNLSESESFAGADEPPAAPRDASLIESHDMDEGPAAPARTLSPTGYEAGKHAPGGIANSDEAPPGAYNAQEYKHLNVGEDVRELFSYIGRYKPQTVELDTRIKPFIPDYIPAVGGIDEFIKVPRPDTKPDYLGLKVLDEPAAKQSDPTVLTLQLRQLSKEAPGAKADMVGRLEHTDENKAKKIQQWIASINDIHKAKPAATVNYSKRMPEIEALMQEWPPEVETFLKTMHMPSGDVELDIKTYARLVCTLLDIPVYDDPVESLHVLFTLYLEFKNNPIFRQHMEMENKLDGMSGGGGGMMGGGADVLGL</sequence>
<proteinExistence type="evidence at protein level"/>
<organism>
    <name type="scientific">Chlamydomonas reinhardtii</name>
    <name type="common">Chlamydomonas smithii</name>
    <dbReference type="NCBI Taxonomy" id="3055"/>
    <lineage>
        <taxon>Eukaryota</taxon>
        <taxon>Viridiplantae</taxon>
        <taxon>Chlorophyta</taxon>
        <taxon>core chlorophytes</taxon>
        <taxon>Chlorophyceae</taxon>
        <taxon>CS clade</taxon>
        <taxon>Chlamydomonadales</taxon>
        <taxon>Chlamydomonadaceae</taxon>
        <taxon>Chlamydomonas</taxon>
    </lineage>
</organism>